<organism>
    <name type="scientific">Mycobacterium sp. (strain JLS)</name>
    <dbReference type="NCBI Taxonomy" id="164757"/>
    <lineage>
        <taxon>Bacteria</taxon>
        <taxon>Bacillati</taxon>
        <taxon>Actinomycetota</taxon>
        <taxon>Actinomycetes</taxon>
        <taxon>Mycobacteriales</taxon>
        <taxon>Mycobacteriaceae</taxon>
        <taxon>Mycobacterium</taxon>
    </lineage>
</organism>
<name>GCS22_MYCSJ</name>
<sequence>MAAHPTVGVEEEFLLVDPDSGAPIARNRDVARHAADRGVDLQLELTSCQVETATGVASSMADVREQLTHLRSTVARAADDSGARLLAVAVPPTVPHEFPVTDNPRYHRIAERFGMLAREQGICGAHVHVAVPTREVAIRVSNRLRPWLPVLLALTANSAIYRNADSGYASWRRMLWARWPSAGPPPHFDSADEFDAMVRMLLQSGAMLDEGQVYWDVRPSADFPTIEVRVADVPATVADTVLFAAIVRATVMTLLGDERDGAGVPRISAHALDAAYWRSARDGLDGIAIDLAESHAPMPARDLLGVLVDRITPALRAVGDHDLVRDGLARLDDEGNGAMRQRAAWRRRGEIADVIDAVAEATLA</sequence>
<feature type="chain" id="PRO_0000291496" description="Putative glutamate--cysteine ligase 2-2">
    <location>
        <begin position="1"/>
        <end position="364"/>
    </location>
</feature>
<proteinExistence type="inferred from homology"/>
<evidence type="ECO:0000255" key="1">
    <source>
        <dbReference type="HAMAP-Rule" id="MF_01609"/>
    </source>
</evidence>
<accession>A3Q5U2</accession>
<gene>
    <name type="ordered locus">Mjls_4754</name>
</gene>
<keyword id="KW-0067">ATP-binding</keyword>
<keyword id="KW-0436">Ligase</keyword>
<keyword id="KW-0547">Nucleotide-binding</keyword>
<comment type="function">
    <text evidence="1">ATP-dependent carboxylate-amine ligase which exhibits weak glutamate--cysteine ligase activity.</text>
</comment>
<comment type="catalytic activity">
    <reaction evidence="1">
        <text>L-cysteine + L-glutamate + ATP = gamma-L-glutamyl-L-cysteine + ADP + phosphate + H(+)</text>
        <dbReference type="Rhea" id="RHEA:13285"/>
        <dbReference type="ChEBI" id="CHEBI:15378"/>
        <dbReference type="ChEBI" id="CHEBI:29985"/>
        <dbReference type="ChEBI" id="CHEBI:30616"/>
        <dbReference type="ChEBI" id="CHEBI:35235"/>
        <dbReference type="ChEBI" id="CHEBI:43474"/>
        <dbReference type="ChEBI" id="CHEBI:58173"/>
        <dbReference type="ChEBI" id="CHEBI:456216"/>
        <dbReference type="EC" id="6.3.2.2"/>
    </reaction>
</comment>
<comment type="similarity">
    <text evidence="1">Belongs to the glutamate--cysteine ligase type 2 family. YbdK subfamily.</text>
</comment>
<dbReference type="EC" id="6.3.2.2" evidence="1"/>
<dbReference type="EMBL" id="CP000580">
    <property type="protein sequence ID" value="ABO00520.1"/>
    <property type="molecule type" value="Genomic_DNA"/>
</dbReference>
<dbReference type="SMR" id="A3Q5U2"/>
<dbReference type="KEGG" id="mjl:Mjls_4754"/>
<dbReference type="HOGENOM" id="CLU_044848_0_0_11"/>
<dbReference type="BioCyc" id="MSP164757:G1G8C-4799-MONOMER"/>
<dbReference type="GO" id="GO:0005524">
    <property type="term" value="F:ATP binding"/>
    <property type="evidence" value="ECO:0007669"/>
    <property type="project" value="UniProtKB-KW"/>
</dbReference>
<dbReference type="GO" id="GO:0004357">
    <property type="term" value="F:glutamate-cysteine ligase activity"/>
    <property type="evidence" value="ECO:0007669"/>
    <property type="project" value="UniProtKB-EC"/>
</dbReference>
<dbReference type="GO" id="GO:0042398">
    <property type="term" value="P:modified amino acid biosynthetic process"/>
    <property type="evidence" value="ECO:0007669"/>
    <property type="project" value="InterPro"/>
</dbReference>
<dbReference type="Gene3D" id="3.30.590.20">
    <property type="match status" value="1"/>
</dbReference>
<dbReference type="HAMAP" id="MF_01609">
    <property type="entry name" value="Glu_cys_ligase_2"/>
    <property type="match status" value="1"/>
</dbReference>
<dbReference type="InterPro" id="IPR050141">
    <property type="entry name" value="GCL_type2/YbdK_subfam"/>
</dbReference>
<dbReference type="InterPro" id="IPR006336">
    <property type="entry name" value="GCS2"/>
</dbReference>
<dbReference type="InterPro" id="IPR014746">
    <property type="entry name" value="Gln_synth/guanido_kin_cat_dom"/>
</dbReference>
<dbReference type="InterPro" id="IPR011793">
    <property type="entry name" value="YbdK"/>
</dbReference>
<dbReference type="NCBIfam" id="TIGR02050">
    <property type="entry name" value="gshA_cyan_rel"/>
    <property type="match status" value="1"/>
</dbReference>
<dbReference type="NCBIfam" id="NF010041">
    <property type="entry name" value="PRK13517.1-1"/>
    <property type="match status" value="1"/>
</dbReference>
<dbReference type="PANTHER" id="PTHR36510">
    <property type="entry name" value="GLUTAMATE--CYSTEINE LIGASE 2-RELATED"/>
    <property type="match status" value="1"/>
</dbReference>
<dbReference type="PANTHER" id="PTHR36510:SF1">
    <property type="entry name" value="GLUTAMATE--CYSTEINE LIGASE 2-RELATED"/>
    <property type="match status" value="1"/>
</dbReference>
<dbReference type="Pfam" id="PF04107">
    <property type="entry name" value="GCS2"/>
    <property type="match status" value="1"/>
</dbReference>
<dbReference type="SUPFAM" id="SSF55931">
    <property type="entry name" value="Glutamine synthetase/guanido kinase"/>
    <property type="match status" value="1"/>
</dbReference>
<reference key="1">
    <citation type="submission" date="2007-02" db="EMBL/GenBank/DDBJ databases">
        <title>Complete sequence of Mycobacterium sp. JLS.</title>
        <authorList>
            <consortium name="US DOE Joint Genome Institute"/>
            <person name="Copeland A."/>
            <person name="Lucas S."/>
            <person name="Lapidus A."/>
            <person name="Barry K."/>
            <person name="Detter J.C."/>
            <person name="Glavina del Rio T."/>
            <person name="Hammon N."/>
            <person name="Israni S."/>
            <person name="Dalin E."/>
            <person name="Tice H."/>
            <person name="Pitluck S."/>
            <person name="Chain P."/>
            <person name="Malfatti S."/>
            <person name="Shin M."/>
            <person name="Vergez L."/>
            <person name="Schmutz J."/>
            <person name="Larimer F."/>
            <person name="Land M."/>
            <person name="Hauser L."/>
            <person name="Kyrpides N."/>
            <person name="Mikhailova N."/>
            <person name="Miller C.D."/>
            <person name="Anderson A.J."/>
            <person name="Sims R.C."/>
            <person name="Richardson P."/>
        </authorList>
    </citation>
    <scope>NUCLEOTIDE SEQUENCE [LARGE SCALE GENOMIC DNA]</scope>
    <source>
        <strain>JLS</strain>
    </source>
</reference>
<protein>
    <recommendedName>
        <fullName evidence="1">Putative glutamate--cysteine ligase 2-2</fullName>
        <ecNumber evidence="1">6.3.2.2</ecNumber>
    </recommendedName>
    <alternativeName>
        <fullName evidence="1">Gamma-glutamylcysteine synthetase 2-2</fullName>
        <shortName evidence="1">GCS 2-2</shortName>
        <shortName evidence="1">Gamma-GCS 2-2</shortName>
    </alternativeName>
</protein>